<organism>
    <name type="scientific">Mycobacterium bovis (strain ATCC BAA-935 / AF2122/97)</name>
    <dbReference type="NCBI Taxonomy" id="233413"/>
    <lineage>
        <taxon>Bacteria</taxon>
        <taxon>Bacillati</taxon>
        <taxon>Actinomycetota</taxon>
        <taxon>Actinomycetes</taxon>
        <taxon>Mycobacteriales</taxon>
        <taxon>Mycobacteriaceae</taxon>
        <taxon>Mycobacterium</taxon>
        <taxon>Mycobacterium tuberculosis complex</taxon>
    </lineage>
</organism>
<feature type="chain" id="PRO_0000102795" description="Succinate--CoA ligase [ADP-forming] subunit alpha">
    <location>
        <begin position="1"/>
        <end position="303"/>
    </location>
</feature>
<feature type="active site" description="Tele-phosphohistidine intermediate" evidence="1">
    <location>
        <position position="259"/>
    </location>
</feature>
<feature type="binding site" evidence="1">
    <location>
        <begin position="20"/>
        <end position="23"/>
    </location>
    <ligand>
        <name>CoA</name>
        <dbReference type="ChEBI" id="CHEBI:57287"/>
    </ligand>
</feature>
<feature type="binding site" evidence="1">
    <location>
        <position position="46"/>
    </location>
    <ligand>
        <name>CoA</name>
        <dbReference type="ChEBI" id="CHEBI:57287"/>
    </ligand>
</feature>
<feature type="binding site" evidence="1">
    <location>
        <begin position="108"/>
        <end position="110"/>
    </location>
    <ligand>
        <name>CoA</name>
        <dbReference type="ChEBI" id="CHEBI:57287"/>
    </ligand>
</feature>
<feature type="binding site" evidence="1">
    <location>
        <position position="173"/>
    </location>
    <ligand>
        <name>substrate</name>
        <note>ligand shared with subunit beta</note>
    </ligand>
</feature>
<comment type="function">
    <text evidence="1">Succinyl-CoA synthetase functions in the citric acid cycle (TCA), coupling the hydrolysis of succinyl-CoA to the synthesis of either ATP or GTP and thus represents the only step of substrate-level phosphorylation in the TCA. The alpha subunit of the enzyme binds the substrates coenzyme A and phosphate, while succinate binding and nucleotide specificity is provided by the beta subunit.</text>
</comment>
<comment type="catalytic activity">
    <reaction evidence="1">
        <text>succinate + ATP + CoA = succinyl-CoA + ADP + phosphate</text>
        <dbReference type="Rhea" id="RHEA:17661"/>
        <dbReference type="ChEBI" id="CHEBI:30031"/>
        <dbReference type="ChEBI" id="CHEBI:30616"/>
        <dbReference type="ChEBI" id="CHEBI:43474"/>
        <dbReference type="ChEBI" id="CHEBI:57287"/>
        <dbReference type="ChEBI" id="CHEBI:57292"/>
        <dbReference type="ChEBI" id="CHEBI:456216"/>
        <dbReference type="EC" id="6.2.1.5"/>
    </reaction>
    <physiologicalReaction direction="right-to-left" evidence="1">
        <dbReference type="Rhea" id="RHEA:17663"/>
    </physiologicalReaction>
</comment>
<comment type="catalytic activity">
    <reaction evidence="1">
        <text>GTP + succinate + CoA = succinyl-CoA + GDP + phosphate</text>
        <dbReference type="Rhea" id="RHEA:22120"/>
        <dbReference type="ChEBI" id="CHEBI:30031"/>
        <dbReference type="ChEBI" id="CHEBI:37565"/>
        <dbReference type="ChEBI" id="CHEBI:43474"/>
        <dbReference type="ChEBI" id="CHEBI:57287"/>
        <dbReference type="ChEBI" id="CHEBI:57292"/>
        <dbReference type="ChEBI" id="CHEBI:58189"/>
    </reaction>
    <physiologicalReaction direction="right-to-left" evidence="1">
        <dbReference type="Rhea" id="RHEA:22122"/>
    </physiologicalReaction>
</comment>
<comment type="pathway">
    <text evidence="1">Carbohydrate metabolism; tricarboxylic acid cycle; succinate from succinyl-CoA (ligase route): step 1/1.</text>
</comment>
<comment type="subunit">
    <text evidence="1">Heterotetramer of two alpha and two beta subunits.</text>
</comment>
<comment type="similarity">
    <text evidence="1">Belongs to the succinate/malate CoA ligase alpha subunit family.</text>
</comment>
<accession>Q7U0Z0</accession>
<accession>A0A1R3XX97</accession>
<accession>X2BGN0</accession>
<proteinExistence type="inferred from homology"/>
<gene>
    <name evidence="1" type="primary">sucD</name>
    <name type="ordered locus">BQ2027_MB0977</name>
</gene>
<sequence>MTHMSIFLSRDNKVIVQGITGSEATVHTARMLRAGTQIVGGVNARKAGTTVTHEDKGGRLIKLPVFGSVAEAMEKTGADVSIIFVPPTFAKDAIIEAIDAEIPLLVVITEGIPVQDTAYAWAYNLEAGHKTRIIGPNCPGIISPGQSLAGITPANITGPGPIGLVSKSGTLTYQMMFELRDLGFSTAIGIGGDPVIGTTHIDAIEAFEKDPDTKLIVMIGEIGGDAEERAADFIKTNVSKPVVGYVAGFTAPEGKTMGHAGAIVSGSSGTAAAKQEALEAAGVKVGKTPSATAALAREILLSL</sequence>
<evidence type="ECO:0000255" key="1">
    <source>
        <dbReference type="HAMAP-Rule" id="MF_01988"/>
    </source>
</evidence>
<dbReference type="EC" id="6.2.1.5" evidence="1"/>
<dbReference type="EMBL" id="LT708304">
    <property type="protein sequence ID" value="SIT99575.1"/>
    <property type="molecule type" value="Genomic_DNA"/>
</dbReference>
<dbReference type="RefSeq" id="NP_854634.1">
    <property type="nucleotide sequence ID" value="NC_002945.3"/>
</dbReference>
<dbReference type="SMR" id="Q7U0Z0"/>
<dbReference type="KEGG" id="mbo:BQ2027_MB0977"/>
<dbReference type="PATRIC" id="fig|233413.5.peg.1064"/>
<dbReference type="UniPathway" id="UPA00223">
    <property type="reaction ID" value="UER00999"/>
</dbReference>
<dbReference type="Proteomes" id="UP000001419">
    <property type="component" value="Chromosome"/>
</dbReference>
<dbReference type="GO" id="GO:0005829">
    <property type="term" value="C:cytosol"/>
    <property type="evidence" value="ECO:0007669"/>
    <property type="project" value="TreeGrafter"/>
</dbReference>
<dbReference type="GO" id="GO:0009361">
    <property type="term" value="C:succinate-CoA ligase complex (ADP-forming)"/>
    <property type="evidence" value="ECO:0007669"/>
    <property type="project" value="TreeGrafter"/>
</dbReference>
<dbReference type="GO" id="GO:0000166">
    <property type="term" value="F:nucleotide binding"/>
    <property type="evidence" value="ECO:0007669"/>
    <property type="project" value="UniProtKB-KW"/>
</dbReference>
<dbReference type="GO" id="GO:0004775">
    <property type="term" value="F:succinate-CoA ligase (ADP-forming) activity"/>
    <property type="evidence" value="ECO:0007669"/>
    <property type="project" value="UniProtKB-UniRule"/>
</dbReference>
<dbReference type="GO" id="GO:0004776">
    <property type="term" value="F:succinate-CoA ligase (GDP-forming) activity"/>
    <property type="evidence" value="ECO:0007669"/>
    <property type="project" value="TreeGrafter"/>
</dbReference>
<dbReference type="GO" id="GO:0006099">
    <property type="term" value="P:tricarboxylic acid cycle"/>
    <property type="evidence" value="ECO:0007669"/>
    <property type="project" value="UniProtKB-UniRule"/>
</dbReference>
<dbReference type="FunFam" id="3.40.50.261:FF:000006">
    <property type="entry name" value="Succinate--CoA ligase [ADP-forming] subunit alpha"/>
    <property type="match status" value="1"/>
</dbReference>
<dbReference type="FunFam" id="3.40.50.720:FF:000205">
    <property type="entry name" value="Succinate--CoA ligase [ADP-forming] subunit alpha"/>
    <property type="match status" value="1"/>
</dbReference>
<dbReference type="Gene3D" id="3.40.50.720">
    <property type="entry name" value="NAD(P)-binding Rossmann-like Domain"/>
    <property type="match status" value="1"/>
</dbReference>
<dbReference type="Gene3D" id="3.40.50.261">
    <property type="entry name" value="Succinyl-CoA synthetase domains"/>
    <property type="match status" value="1"/>
</dbReference>
<dbReference type="HAMAP" id="MF_01988">
    <property type="entry name" value="Succ_CoA_alpha"/>
    <property type="match status" value="1"/>
</dbReference>
<dbReference type="InterPro" id="IPR017440">
    <property type="entry name" value="Cit_synth/succinyl-CoA_lig_AS"/>
</dbReference>
<dbReference type="InterPro" id="IPR033847">
    <property type="entry name" value="Citrt_syn/SCS-alpha_CS"/>
</dbReference>
<dbReference type="InterPro" id="IPR003781">
    <property type="entry name" value="CoA-bd"/>
</dbReference>
<dbReference type="InterPro" id="IPR005810">
    <property type="entry name" value="CoA_lig_alpha"/>
</dbReference>
<dbReference type="InterPro" id="IPR036291">
    <property type="entry name" value="NAD(P)-bd_dom_sf"/>
</dbReference>
<dbReference type="InterPro" id="IPR005811">
    <property type="entry name" value="SUCC_ACL_C"/>
</dbReference>
<dbReference type="InterPro" id="IPR016102">
    <property type="entry name" value="Succinyl-CoA_synth-like"/>
</dbReference>
<dbReference type="NCBIfam" id="NF004230">
    <property type="entry name" value="PRK05678.1"/>
    <property type="match status" value="1"/>
</dbReference>
<dbReference type="NCBIfam" id="TIGR01019">
    <property type="entry name" value="sucCoAalpha"/>
    <property type="match status" value="1"/>
</dbReference>
<dbReference type="PANTHER" id="PTHR11117:SF2">
    <property type="entry name" value="SUCCINATE--COA LIGASE [ADP_GDP-FORMING] SUBUNIT ALPHA, MITOCHONDRIAL"/>
    <property type="match status" value="1"/>
</dbReference>
<dbReference type="PANTHER" id="PTHR11117">
    <property type="entry name" value="SUCCINYL-COA LIGASE SUBUNIT ALPHA"/>
    <property type="match status" value="1"/>
</dbReference>
<dbReference type="Pfam" id="PF02629">
    <property type="entry name" value="CoA_binding"/>
    <property type="match status" value="1"/>
</dbReference>
<dbReference type="Pfam" id="PF00549">
    <property type="entry name" value="Ligase_CoA"/>
    <property type="match status" value="1"/>
</dbReference>
<dbReference type="PIRSF" id="PIRSF001553">
    <property type="entry name" value="SucCS_alpha"/>
    <property type="match status" value="1"/>
</dbReference>
<dbReference type="PRINTS" id="PR01798">
    <property type="entry name" value="SCOASYNTHASE"/>
</dbReference>
<dbReference type="SMART" id="SM00881">
    <property type="entry name" value="CoA_binding"/>
    <property type="match status" value="1"/>
</dbReference>
<dbReference type="SUPFAM" id="SSF51735">
    <property type="entry name" value="NAD(P)-binding Rossmann-fold domains"/>
    <property type="match status" value="1"/>
</dbReference>
<dbReference type="SUPFAM" id="SSF52210">
    <property type="entry name" value="Succinyl-CoA synthetase domains"/>
    <property type="match status" value="1"/>
</dbReference>
<dbReference type="PROSITE" id="PS01216">
    <property type="entry name" value="SUCCINYL_COA_LIG_1"/>
    <property type="match status" value="1"/>
</dbReference>
<dbReference type="PROSITE" id="PS00399">
    <property type="entry name" value="SUCCINYL_COA_LIG_2"/>
    <property type="match status" value="1"/>
</dbReference>
<protein>
    <recommendedName>
        <fullName evidence="1">Succinate--CoA ligase [ADP-forming] subunit alpha</fullName>
        <ecNumber evidence="1">6.2.1.5</ecNumber>
    </recommendedName>
    <alternativeName>
        <fullName evidence="1">Succinyl-CoA synthetase subunit alpha</fullName>
        <shortName evidence="1">SCS-alpha</shortName>
    </alternativeName>
</protein>
<reference key="1">
    <citation type="journal article" date="2003" name="Proc. Natl. Acad. Sci. U.S.A.">
        <title>The complete genome sequence of Mycobacterium bovis.</title>
        <authorList>
            <person name="Garnier T."/>
            <person name="Eiglmeier K."/>
            <person name="Camus J.-C."/>
            <person name="Medina N."/>
            <person name="Mansoor H."/>
            <person name="Pryor M."/>
            <person name="Duthoy S."/>
            <person name="Grondin S."/>
            <person name="Lacroix C."/>
            <person name="Monsempe C."/>
            <person name="Simon S."/>
            <person name="Harris B."/>
            <person name="Atkin R."/>
            <person name="Doggett J."/>
            <person name="Mayes R."/>
            <person name="Keating L."/>
            <person name="Wheeler P.R."/>
            <person name="Parkhill J."/>
            <person name="Barrell B.G."/>
            <person name="Cole S.T."/>
            <person name="Gordon S.V."/>
            <person name="Hewinson R.G."/>
        </authorList>
    </citation>
    <scope>NUCLEOTIDE SEQUENCE [LARGE SCALE GENOMIC DNA]</scope>
    <source>
        <strain>ATCC BAA-935 / AF2122/97</strain>
    </source>
</reference>
<reference key="2">
    <citation type="journal article" date="2017" name="Genome Announc.">
        <title>Updated reference genome sequence and annotation of Mycobacterium bovis AF2122/97.</title>
        <authorList>
            <person name="Malone K.M."/>
            <person name="Farrell D."/>
            <person name="Stuber T.P."/>
            <person name="Schubert O.T."/>
            <person name="Aebersold R."/>
            <person name="Robbe-Austerman S."/>
            <person name="Gordon S.V."/>
        </authorList>
    </citation>
    <scope>NUCLEOTIDE SEQUENCE [LARGE SCALE GENOMIC DNA]</scope>
    <scope>GENOME REANNOTATION</scope>
    <source>
        <strain>ATCC BAA-935 / AF2122/97</strain>
    </source>
</reference>
<keyword id="KW-0436">Ligase</keyword>
<keyword id="KW-0547">Nucleotide-binding</keyword>
<keyword id="KW-1185">Reference proteome</keyword>
<keyword id="KW-0816">Tricarboxylic acid cycle</keyword>
<name>SUCD_MYCBO</name>